<proteinExistence type="predicted"/>
<accession>P32858</accession>
<accession>D6VXP9</accession>
<organism>
    <name type="scientific">Saccharomyces cerevisiae (strain ATCC 204508 / S288c)</name>
    <name type="common">Baker's yeast</name>
    <dbReference type="NCBI Taxonomy" id="559292"/>
    <lineage>
        <taxon>Eukaryota</taxon>
        <taxon>Fungi</taxon>
        <taxon>Dikarya</taxon>
        <taxon>Ascomycota</taxon>
        <taxon>Saccharomycotina</taxon>
        <taxon>Saccharomycetes</taxon>
        <taxon>Saccharomycetales</taxon>
        <taxon>Saccharomycetaceae</taxon>
        <taxon>Saccharomyces</taxon>
    </lineage>
</organism>
<sequence length="118" mass="12936">MQTMGGEHLLLSQLKGSFFLLLLAYFFRGRSPYYARCYRRLAVTPGAITIAIAIATDSIPALAKSKVLVSVCSHTDPCTASCNLIPFPRPFSNSLTRFLFCLGSARFCISFPCFGLSI</sequence>
<evidence type="ECO:0000255" key="1"/>
<evidence type="ECO:0000269" key="2">
    <source>
    </source>
</evidence>
<evidence type="ECO:0000269" key="3">
    <source>
    </source>
</evidence>
<evidence type="ECO:0000269" key="4">
    <source>
    </source>
</evidence>
<keyword id="KW-0072">Autophagy</keyword>
<keyword id="KW-0472">Membrane</keyword>
<keyword id="KW-0496">Mitochondrion</keyword>
<keyword id="KW-1185">Reference proteome</keyword>
<keyword id="KW-0812">Transmembrane</keyword>
<keyword id="KW-1133">Transmembrane helix</keyword>
<feature type="chain" id="PRO_0000203183" description="Altered inheritance of mitochondria protein 26, mitochondrial">
    <location>
        <begin position="1"/>
        <end position="118"/>
    </location>
</feature>
<feature type="transmembrane region" description="Helical" evidence="1">
    <location>
        <begin position="7"/>
        <end position="27"/>
    </location>
</feature>
<feature type="transmembrane region" description="Helical" evidence="1">
    <location>
        <begin position="41"/>
        <end position="61"/>
    </location>
</feature>
<feature type="transmembrane region" description="Helical" evidence="1">
    <location>
        <begin position="98"/>
        <end position="118"/>
    </location>
</feature>
<gene>
    <name type="primary">AIM26</name>
    <name type="ordered locus">YKL037W</name>
    <name type="ORF">YKL250</name>
</gene>
<name>AIM26_YEAST</name>
<protein>
    <recommendedName>
        <fullName>Altered inheritance of mitochondria protein 26, mitochondrial</fullName>
    </recommendedName>
</protein>
<reference key="1">
    <citation type="journal article" date="1992" name="Yeast">
        <title>The sequence of a 12 kb fragment on the left arm of yeast chromosome XI reveals five new open reading frames, including a zinc finger protein and a homolog of the UDP-glucose pyrophosphorylase from potato.</title>
        <authorList>
            <person name="Purnelle B."/>
            <person name="Skala J."/>
            <person name="van Dyck L."/>
            <person name="Goffeau A."/>
        </authorList>
    </citation>
    <scope>NUCLEOTIDE SEQUENCE [GENOMIC DNA]</scope>
    <source>
        <strain>ATCC 204508 / S288c</strain>
    </source>
</reference>
<reference key="2">
    <citation type="journal article" date="1994" name="Nature">
        <title>Complete DNA sequence of yeast chromosome XI.</title>
        <authorList>
            <person name="Dujon B."/>
            <person name="Alexandraki D."/>
            <person name="Andre B."/>
            <person name="Ansorge W."/>
            <person name="Baladron V."/>
            <person name="Ballesta J.P.G."/>
            <person name="Banrevi A."/>
            <person name="Bolle P.-A."/>
            <person name="Bolotin-Fukuhara M."/>
            <person name="Bossier P."/>
            <person name="Bou G."/>
            <person name="Boyer J."/>
            <person name="Buitrago M.J."/>
            <person name="Cheret G."/>
            <person name="Colleaux L."/>
            <person name="Daignan-Fornier B."/>
            <person name="del Rey F."/>
            <person name="Dion C."/>
            <person name="Domdey H."/>
            <person name="Duesterhoeft A."/>
            <person name="Duesterhus S."/>
            <person name="Entian K.-D."/>
            <person name="Erfle H."/>
            <person name="Esteban P.F."/>
            <person name="Feldmann H."/>
            <person name="Fernandes L."/>
            <person name="Fobo G.M."/>
            <person name="Fritz C."/>
            <person name="Fukuhara H."/>
            <person name="Gabel C."/>
            <person name="Gaillon L."/>
            <person name="Garcia-Cantalejo J.M."/>
            <person name="Garcia-Ramirez J.J."/>
            <person name="Gent M.E."/>
            <person name="Ghazvini M."/>
            <person name="Goffeau A."/>
            <person name="Gonzalez A."/>
            <person name="Grothues D."/>
            <person name="Guerreiro P."/>
            <person name="Hegemann J.H."/>
            <person name="Hewitt N."/>
            <person name="Hilger F."/>
            <person name="Hollenberg C.P."/>
            <person name="Horaitis O."/>
            <person name="Indge K.J."/>
            <person name="Jacquier A."/>
            <person name="James C.M."/>
            <person name="Jauniaux J.-C."/>
            <person name="Jimenez A."/>
            <person name="Keuchel H."/>
            <person name="Kirchrath L."/>
            <person name="Kleine K."/>
            <person name="Koetter P."/>
            <person name="Legrain P."/>
            <person name="Liebl S."/>
            <person name="Louis E.J."/>
            <person name="Maia e Silva A."/>
            <person name="Marck C."/>
            <person name="Monnier A.-L."/>
            <person name="Moestl D."/>
            <person name="Mueller S."/>
            <person name="Obermaier B."/>
            <person name="Oliver S.G."/>
            <person name="Pallier C."/>
            <person name="Pascolo S."/>
            <person name="Pfeiffer F."/>
            <person name="Philippsen P."/>
            <person name="Planta R.J."/>
            <person name="Pohl F.M."/>
            <person name="Pohl T.M."/>
            <person name="Poehlmann R."/>
            <person name="Portetelle D."/>
            <person name="Purnelle B."/>
            <person name="Puzos V."/>
            <person name="Ramezani Rad M."/>
            <person name="Rasmussen S.W."/>
            <person name="Remacha M.A."/>
            <person name="Revuelta J.L."/>
            <person name="Richard G.-F."/>
            <person name="Rieger M."/>
            <person name="Rodrigues-Pousada C."/>
            <person name="Rose M."/>
            <person name="Rupp T."/>
            <person name="Santos M.A."/>
            <person name="Schwager C."/>
            <person name="Sensen C."/>
            <person name="Skala J."/>
            <person name="Soares H."/>
            <person name="Sor F."/>
            <person name="Stegemann J."/>
            <person name="Tettelin H."/>
            <person name="Thierry A."/>
            <person name="Tzermia M."/>
            <person name="Urrestarazu L.A."/>
            <person name="van Dyck L."/>
            <person name="van Vliet-Reedijk J.C."/>
            <person name="Valens M."/>
            <person name="Vandenbol M."/>
            <person name="Vilela C."/>
            <person name="Vissers S."/>
            <person name="von Wettstein D."/>
            <person name="Voss H."/>
            <person name="Wiemann S."/>
            <person name="Xu G."/>
            <person name="Zimmermann J."/>
            <person name="Haasemann M."/>
            <person name="Becker I."/>
            <person name="Mewes H.-W."/>
        </authorList>
    </citation>
    <scope>NUCLEOTIDE SEQUENCE [LARGE SCALE GENOMIC DNA]</scope>
    <source>
        <strain>ATCC 204508 / S288c</strain>
    </source>
</reference>
<reference key="3">
    <citation type="journal article" date="2014" name="G3 (Bethesda)">
        <title>The reference genome sequence of Saccharomyces cerevisiae: Then and now.</title>
        <authorList>
            <person name="Engel S.R."/>
            <person name="Dietrich F.S."/>
            <person name="Fisk D.G."/>
            <person name="Binkley G."/>
            <person name="Balakrishnan R."/>
            <person name="Costanzo M.C."/>
            <person name="Dwight S.S."/>
            <person name="Hitz B.C."/>
            <person name="Karra K."/>
            <person name="Nash R.S."/>
            <person name="Weng S."/>
            <person name="Wong E.D."/>
            <person name="Lloyd P."/>
            <person name="Skrzypek M.S."/>
            <person name="Miyasato S.R."/>
            <person name="Simison M."/>
            <person name="Cherry J.M."/>
        </authorList>
    </citation>
    <scope>GENOME REANNOTATION</scope>
    <source>
        <strain>ATCC 204508 / S288c</strain>
    </source>
</reference>
<reference key="4">
    <citation type="journal article" date="2009" name="Mol. Biol. Cell">
        <title>A genomic screen for yeast mutants defective in selective mitochondria autophagy.</title>
        <authorList>
            <person name="Kanki T."/>
            <person name="Wang K."/>
            <person name="Baba M."/>
            <person name="Bartholomew C.R."/>
            <person name="Lynch-Day M.A."/>
            <person name="Du Z."/>
            <person name="Geng J."/>
            <person name="Mao K."/>
            <person name="Yang Z."/>
            <person name="Yen W.L."/>
            <person name="Klionsky D.J."/>
        </authorList>
    </citation>
    <scope>SUBCELLULAR LOCATION</scope>
    <scope>FUNCTION</scope>
</reference>
<reference key="5">
    <citation type="journal article" date="2009" name="PLoS Genet.">
        <title>Computationally driven, quantitative experiments discover genes required for mitochondrial biogenesis.</title>
        <authorList>
            <person name="Hess D.C."/>
            <person name="Myers C.L."/>
            <person name="Huttenhower C."/>
            <person name="Hibbs M.A."/>
            <person name="Hayes A.P."/>
            <person name="Paw J."/>
            <person name="Clore J.J."/>
            <person name="Mendoza R.M."/>
            <person name="Luis B.S."/>
            <person name="Nislow C."/>
            <person name="Giaever G."/>
            <person name="Costanzo M."/>
            <person name="Troyanskaya O.G."/>
            <person name="Caudy A.A."/>
        </authorList>
    </citation>
    <scope>DISRUPTION PHENOTYPE</scope>
</reference>
<reference key="6">
    <citation type="journal article" date="2010" name="Autophagy">
        <title>A genomic screen for yeast mutants defective in mitophagy.</title>
        <authorList>
            <person name="Kanki T."/>
            <person name="Wang K."/>
            <person name="Klionsky D.J."/>
        </authorList>
    </citation>
    <scope>FUNCTION</scope>
</reference>
<comment type="function">
    <text evidence="3 4">Involved in selective mitochondria autophagy (mitophagy).</text>
</comment>
<comment type="subcellular location">
    <subcellularLocation>
        <location evidence="3">Mitochondrion membrane</location>
        <topology evidence="3">Multi-pass membrane protein</topology>
    </subcellularLocation>
</comment>
<comment type="disruption phenotype">
    <text evidence="2">Increases frequency of mitochondrial genome loss.</text>
</comment>
<dbReference type="EMBL" id="X69584">
    <property type="protein sequence ID" value="CAA49302.1"/>
    <property type="molecule type" value="Genomic_DNA"/>
</dbReference>
<dbReference type="EMBL" id="Z28035">
    <property type="protein sequence ID" value="CAA81870.1"/>
    <property type="molecule type" value="Genomic_DNA"/>
</dbReference>
<dbReference type="EMBL" id="BK006944">
    <property type="protein sequence ID" value="DAA09119.1"/>
    <property type="molecule type" value="Genomic_DNA"/>
</dbReference>
<dbReference type="PIR" id="S30009">
    <property type="entry name" value="S30009"/>
</dbReference>
<dbReference type="RefSeq" id="NP_012887.1">
    <property type="nucleotide sequence ID" value="NM_001179603.1"/>
</dbReference>
<dbReference type="BioGRID" id="34095">
    <property type="interactions" value="117"/>
</dbReference>
<dbReference type="FunCoup" id="P32858">
    <property type="interactions" value="59"/>
</dbReference>
<dbReference type="IntAct" id="P32858">
    <property type="interactions" value="3"/>
</dbReference>
<dbReference type="MINT" id="P32858"/>
<dbReference type="STRING" id="4932.YKL037W"/>
<dbReference type="GlyGen" id="P32858">
    <property type="glycosylation" value="1 site"/>
</dbReference>
<dbReference type="PaxDb" id="4932-YKL037W"/>
<dbReference type="EnsemblFungi" id="YKL037W_mRNA">
    <property type="protein sequence ID" value="YKL037W"/>
    <property type="gene ID" value="YKL037W"/>
</dbReference>
<dbReference type="GeneID" id="853829"/>
<dbReference type="KEGG" id="sce:YKL037W"/>
<dbReference type="AGR" id="SGD:S000001520"/>
<dbReference type="SGD" id="S000001520">
    <property type="gene designation" value="AIM26"/>
</dbReference>
<dbReference type="VEuPathDB" id="FungiDB:YKL037W"/>
<dbReference type="HOGENOM" id="CLU_2074477_0_0_1"/>
<dbReference type="InParanoid" id="P32858"/>
<dbReference type="OrthoDB" id="10313049at2759"/>
<dbReference type="BioCyc" id="YEAST:G3O-31838-MONOMER"/>
<dbReference type="BioGRID-ORCS" id="853829">
    <property type="hits" value="7 hits in 10 CRISPR screens"/>
</dbReference>
<dbReference type="PRO" id="PR:P32858"/>
<dbReference type="Proteomes" id="UP000002311">
    <property type="component" value="Chromosome XI"/>
</dbReference>
<dbReference type="RNAct" id="P32858">
    <property type="molecule type" value="protein"/>
</dbReference>
<dbReference type="GO" id="GO:0031966">
    <property type="term" value="C:mitochondrial membrane"/>
    <property type="evidence" value="ECO:0007669"/>
    <property type="project" value="UniProtKB-SubCell"/>
</dbReference>
<dbReference type="GO" id="GO:0005739">
    <property type="term" value="C:mitochondrion"/>
    <property type="evidence" value="ECO:0000314"/>
    <property type="project" value="SGD"/>
</dbReference>
<dbReference type="GO" id="GO:0000422">
    <property type="term" value="P:autophagy of mitochondrion"/>
    <property type="evidence" value="ECO:0000315"/>
    <property type="project" value="SGD"/>
</dbReference>
<dbReference type="GO" id="GO:0016236">
    <property type="term" value="P:macroautophagy"/>
    <property type="evidence" value="ECO:0000315"/>
    <property type="project" value="SGD"/>
</dbReference>